<gene>
    <name evidence="1" type="primary">fluC</name>
    <name evidence="1" type="synonym">crcB</name>
    <name type="ordered locus">VCM66_0060</name>
</gene>
<reference key="1">
    <citation type="journal article" date="2008" name="PLoS ONE">
        <title>A recalibrated molecular clock and independent origins for the cholera pandemic clones.</title>
        <authorList>
            <person name="Feng L."/>
            <person name="Reeves P.R."/>
            <person name="Lan R."/>
            <person name="Ren Y."/>
            <person name="Gao C."/>
            <person name="Zhou Z."/>
            <person name="Ren Y."/>
            <person name="Cheng J."/>
            <person name="Wang W."/>
            <person name="Wang J."/>
            <person name="Qian W."/>
            <person name="Li D."/>
            <person name="Wang L."/>
        </authorList>
    </citation>
    <scope>NUCLEOTIDE SEQUENCE [LARGE SCALE GENOMIC DNA]</scope>
    <source>
        <strain>M66-2</strain>
    </source>
</reference>
<comment type="function">
    <text evidence="1">Fluoride-specific ion channel. Important for reducing fluoride concentration in the cell, thus reducing its toxicity.</text>
</comment>
<comment type="catalytic activity">
    <reaction evidence="1">
        <text>fluoride(in) = fluoride(out)</text>
        <dbReference type="Rhea" id="RHEA:76159"/>
        <dbReference type="ChEBI" id="CHEBI:17051"/>
    </reaction>
    <physiologicalReaction direction="left-to-right" evidence="1">
        <dbReference type="Rhea" id="RHEA:76160"/>
    </physiologicalReaction>
</comment>
<comment type="activity regulation">
    <text evidence="1">Na(+) is not transported, but it plays an essential structural role and its presence is essential for fluoride channel function.</text>
</comment>
<comment type="subcellular location">
    <subcellularLocation>
        <location evidence="1">Cell inner membrane</location>
        <topology evidence="1">Multi-pass membrane protein</topology>
    </subcellularLocation>
</comment>
<comment type="similarity">
    <text evidence="1">Belongs to the fluoride channel Fluc/FEX (TC 1.A.43) family.</text>
</comment>
<name>FLUC_VIBCM</name>
<keyword id="KW-0997">Cell inner membrane</keyword>
<keyword id="KW-1003">Cell membrane</keyword>
<keyword id="KW-0407">Ion channel</keyword>
<keyword id="KW-0406">Ion transport</keyword>
<keyword id="KW-0472">Membrane</keyword>
<keyword id="KW-0479">Metal-binding</keyword>
<keyword id="KW-0915">Sodium</keyword>
<keyword id="KW-0812">Transmembrane</keyword>
<keyword id="KW-1133">Transmembrane helix</keyword>
<keyword id="KW-0813">Transport</keyword>
<accession>C3LPQ2</accession>
<organism>
    <name type="scientific">Vibrio cholerae serotype O1 (strain M66-2)</name>
    <dbReference type="NCBI Taxonomy" id="579112"/>
    <lineage>
        <taxon>Bacteria</taxon>
        <taxon>Pseudomonadati</taxon>
        <taxon>Pseudomonadota</taxon>
        <taxon>Gammaproteobacteria</taxon>
        <taxon>Vibrionales</taxon>
        <taxon>Vibrionaceae</taxon>
        <taxon>Vibrio</taxon>
    </lineage>
</organism>
<protein>
    <recommendedName>
        <fullName evidence="1">Fluoride-specific ion channel FluC</fullName>
    </recommendedName>
</protein>
<sequence length="126" mass="13531">MSFAILGFIALGGAVGACARFLVSEICVTLFGRGFPIGTLTVNVVGSFIMGVLIACVENEWLSPYPWKQVIGLGFLGALTTFSTFSMDNVLLMQQGAFFKMGANVLLNVILSISAAWIGFHWLMKS</sequence>
<evidence type="ECO:0000255" key="1">
    <source>
        <dbReference type="HAMAP-Rule" id="MF_00454"/>
    </source>
</evidence>
<dbReference type="EMBL" id="CP001233">
    <property type="protein sequence ID" value="ACP04396.1"/>
    <property type="molecule type" value="Genomic_DNA"/>
</dbReference>
<dbReference type="RefSeq" id="WP_000006444.1">
    <property type="nucleotide sequence ID" value="NC_012578.1"/>
</dbReference>
<dbReference type="SMR" id="C3LPQ2"/>
<dbReference type="KEGG" id="vcm:VCM66_0060"/>
<dbReference type="HOGENOM" id="CLU_114342_3_0_6"/>
<dbReference type="Proteomes" id="UP000001217">
    <property type="component" value="Chromosome I"/>
</dbReference>
<dbReference type="GO" id="GO:0005886">
    <property type="term" value="C:plasma membrane"/>
    <property type="evidence" value="ECO:0007669"/>
    <property type="project" value="UniProtKB-SubCell"/>
</dbReference>
<dbReference type="GO" id="GO:0062054">
    <property type="term" value="F:fluoride channel activity"/>
    <property type="evidence" value="ECO:0007669"/>
    <property type="project" value="UniProtKB-UniRule"/>
</dbReference>
<dbReference type="GO" id="GO:0046872">
    <property type="term" value="F:metal ion binding"/>
    <property type="evidence" value="ECO:0007669"/>
    <property type="project" value="UniProtKB-KW"/>
</dbReference>
<dbReference type="GO" id="GO:0140114">
    <property type="term" value="P:cellular detoxification of fluoride"/>
    <property type="evidence" value="ECO:0007669"/>
    <property type="project" value="UniProtKB-UniRule"/>
</dbReference>
<dbReference type="HAMAP" id="MF_00454">
    <property type="entry name" value="FluC"/>
    <property type="match status" value="1"/>
</dbReference>
<dbReference type="InterPro" id="IPR003691">
    <property type="entry name" value="FluC"/>
</dbReference>
<dbReference type="NCBIfam" id="TIGR00494">
    <property type="entry name" value="crcB"/>
    <property type="match status" value="1"/>
</dbReference>
<dbReference type="NCBIfam" id="NF010796">
    <property type="entry name" value="PRK14200.1"/>
    <property type="match status" value="1"/>
</dbReference>
<dbReference type="PANTHER" id="PTHR28259">
    <property type="entry name" value="FLUORIDE EXPORT PROTEIN 1-RELATED"/>
    <property type="match status" value="1"/>
</dbReference>
<dbReference type="PANTHER" id="PTHR28259:SF1">
    <property type="entry name" value="FLUORIDE EXPORT PROTEIN 1-RELATED"/>
    <property type="match status" value="1"/>
</dbReference>
<dbReference type="Pfam" id="PF02537">
    <property type="entry name" value="CRCB"/>
    <property type="match status" value="1"/>
</dbReference>
<feature type="chain" id="PRO_1000135329" description="Fluoride-specific ion channel FluC">
    <location>
        <begin position="1"/>
        <end position="126"/>
    </location>
</feature>
<feature type="transmembrane region" description="Helical" evidence="1">
    <location>
        <begin position="3"/>
        <end position="23"/>
    </location>
</feature>
<feature type="transmembrane region" description="Helical" evidence="1">
    <location>
        <begin position="37"/>
        <end position="57"/>
    </location>
</feature>
<feature type="transmembrane region" description="Helical" evidence="1">
    <location>
        <begin position="70"/>
        <end position="90"/>
    </location>
</feature>
<feature type="transmembrane region" description="Helical" evidence="1">
    <location>
        <begin position="104"/>
        <end position="124"/>
    </location>
</feature>
<feature type="binding site" evidence="1">
    <location>
        <position position="77"/>
    </location>
    <ligand>
        <name>Na(+)</name>
        <dbReference type="ChEBI" id="CHEBI:29101"/>
        <note>structural</note>
    </ligand>
</feature>
<feature type="binding site" evidence="1">
    <location>
        <position position="80"/>
    </location>
    <ligand>
        <name>Na(+)</name>
        <dbReference type="ChEBI" id="CHEBI:29101"/>
        <note>structural</note>
    </ligand>
</feature>
<proteinExistence type="inferred from homology"/>